<reference key="1">
    <citation type="journal article" date="2002" name="Tuberculosis">
        <title>A variable number of tandem repeats result in polymorphic alpha-isopropylmalate synthase in Mycobacterium tuberculosis.</title>
        <authorList>
            <person name="Chanchaem W."/>
            <person name="Palittapongarnpim P."/>
        </authorList>
    </citation>
    <scope>NUCLEOTIDE SEQUENCE [GENOMIC DNA]</scope>
    <scope>FUNCTION</scope>
    <scope>CATALYTIC ACTIVITY</scope>
    <scope>BIOPHYSICOCHEMICAL PROPERTIES</scope>
    <scope>PATHWAY</scope>
    <scope>SUBUNIT</scope>
    <source>
        <strain>ATCC 25618 / H37Rv</strain>
    </source>
</reference>
<reference key="2">
    <citation type="journal article" date="1998" name="Nature">
        <title>Deciphering the biology of Mycobacterium tuberculosis from the complete genome sequence.</title>
        <authorList>
            <person name="Cole S.T."/>
            <person name="Brosch R."/>
            <person name="Parkhill J."/>
            <person name="Garnier T."/>
            <person name="Churcher C.M."/>
            <person name="Harris D.E."/>
            <person name="Gordon S.V."/>
            <person name="Eiglmeier K."/>
            <person name="Gas S."/>
            <person name="Barry C.E. III"/>
            <person name="Tekaia F."/>
            <person name="Badcock K."/>
            <person name="Basham D."/>
            <person name="Brown D."/>
            <person name="Chillingworth T."/>
            <person name="Connor R."/>
            <person name="Davies R.M."/>
            <person name="Devlin K."/>
            <person name="Feltwell T."/>
            <person name="Gentles S."/>
            <person name="Hamlin N."/>
            <person name="Holroyd S."/>
            <person name="Hornsby T."/>
            <person name="Jagels K."/>
            <person name="Krogh A."/>
            <person name="McLean J."/>
            <person name="Moule S."/>
            <person name="Murphy L.D."/>
            <person name="Oliver S."/>
            <person name="Osborne J."/>
            <person name="Quail M.A."/>
            <person name="Rajandream M.A."/>
            <person name="Rogers J."/>
            <person name="Rutter S."/>
            <person name="Seeger K."/>
            <person name="Skelton S."/>
            <person name="Squares S."/>
            <person name="Squares R."/>
            <person name="Sulston J.E."/>
            <person name="Taylor K."/>
            <person name="Whitehead S."/>
            <person name="Barrell B.G."/>
        </authorList>
    </citation>
    <scope>NUCLEOTIDE SEQUENCE [LARGE SCALE GENOMIC DNA]</scope>
    <source>
        <strain>ATCC 25618 / H37Rv</strain>
    </source>
</reference>
<reference key="3">
    <citation type="journal article" date="2006" name="Biochemistry">
        <title>Kinetic and chemical mechanism of alpha-isopropylmalate synthase from Mycobacterium tuberculosis.</title>
        <authorList>
            <person name="de Carvalho L.P."/>
            <person name="Blanchard J.S."/>
        </authorList>
    </citation>
    <scope>FUNCTION</scope>
    <scope>CATALYTIC ACTIVITY</scope>
    <scope>COFACTOR</scope>
    <scope>BIOPHYSICOCHEMICAL PROPERTIES</scope>
    <scope>SUBSTRATE SPECIFICITY</scope>
    <scope>SUBUNIT</scope>
    <source>
        <strain>H37Rv</strain>
    </source>
</reference>
<reference key="4">
    <citation type="journal article" date="2008" name="BMC Syst. Biol.">
        <title>targetTB: a target identification pipeline for Mycobacterium tuberculosis through an interactome, reactome and genome-scale structural analysis.</title>
        <authorList>
            <person name="Raman K."/>
            <person name="Yeturu K."/>
            <person name="Chandra N."/>
        </authorList>
    </citation>
    <scope>IDENTIFICATION AS A DRUG TARGET [LARGE SCALE ANALYSIS]</scope>
</reference>
<reference key="5">
    <citation type="journal article" date="2011" name="Mol. Cell. Proteomics">
        <title>Proteogenomic analysis of Mycobacterium tuberculosis by high resolution mass spectrometry.</title>
        <authorList>
            <person name="Kelkar D.S."/>
            <person name="Kumar D."/>
            <person name="Kumar P."/>
            <person name="Balakrishnan L."/>
            <person name="Muthusamy B."/>
            <person name="Yadav A.K."/>
            <person name="Shrivastava P."/>
            <person name="Marimuthu A."/>
            <person name="Anand S."/>
            <person name="Sundaram H."/>
            <person name="Kingsbury R."/>
            <person name="Harsha H.C."/>
            <person name="Nair B."/>
            <person name="Prasad T.S."/>
            <person name="Chauhan D.S."/>
            <person name="Katoch K."/>
            <person name="Katoch V.M."/>
            <person name="Kumar P."/>
            <person name="Chaerkady R."/>
            <person name="Ramachandran S."/>
            <person name="Dash D."/>
            <person name="Pandey A."/>
        </authorList>
    </citation>
    <scope>IDENTIFICATION BY MASS SPECTROMETRY [LARGE SCALE ANALYSIS]</scope>
    <source>
        <strain>ATCC 25618 / H37Rv</strain>
    </source>
</reference>
<reference evidence="16 17" key="6">
    <citation type="journal article" date="2004" name="Proc. Natl. Acad. Sci. U.S.A.">
        <title>Crystal structure of LeuA from Mycobacterium tuberculosis, a key enzyme in leucine biosynthesis.</title>
        <authorList>
            <person name="Koon N."/>
            <person name="Squire C.J."/>
            <person name="Baker E.N."/>
        </authorList>
    </citation>
    <scope>X-RAY CRYSTALLOGRAPHY (2.00 ANGSTROMS) IN COMPLEX WITH ZN(2+) AND 3-METHYL-2-OXOBUTANOATE</scope>
    <scope>X-RAY CRYSTALLOGRAPHY (2.30 ANGSTROMS) IN COMPLEX WITH ZN(2+) AND LEUCINE</scope>
    <scope>COFACTOR</scope>
    <scope>SUBUNIT</scope>
    <scope>DOMAIN</scope>
    <source>
        <strain>H37Rv</strain>
    </source>
</reference>
<reference evidence="18 20 21" key="7">
    <citation type="submission" date="2009-06" db="PDB data bank">
        <title>Probing the active site of M. tuberculosis LeuA.</title>
        <authorList>
            <person name="Koon N."/>
            <person name="Squire C.J."/>
            <person name="Baker E.N."/>
        </authorList>
    </citation>
    <scope>X-RAY CRYSTALLOGRAPHY (1.70 ANGSTROMS) IN COMPLEX WITH MN(2+) OR ZN(2+)</scope>
</reference>
<reference evidence="19 22" key="8">
    <citation type="journal article" date="2012" name="Biochemistry">
        <title>Removal of the C-terminal regulatory domain of alpha-isopropylmalate synthase disrupts functional substrate binding.</title>
        <authorList>
            <person name="Huisman F.H."/>
            <person name="Koon N."/>
            <person name="Bulloch E.M."/>
            <person name="Baker H.M."/>
            <person name="Baker E.N."/>
            <person name="Squire C.J."/>
            <person name="Parker E.J."/>
        </authorList>
    </citation>
    <scope>X-RAY CRYSTALLOGRAPHY (2.03 ANGSTROMS) OF 1-425 IN COMPLEX WITH NI(2+) OR MN(2+) AND 3-METHYL-2-OXOBUTANOATE</scope>
    <scope>COFACTOR</scope>
    <scope>DOMAIN</scope>
    <source>
        <strain>H37Rv</strain>
    </source>
</reference>
<evidence type="ECO:0000255" key="1">
    <source>
        <dbReference type="HAMAP-Rule" id="MF_00572"/>
    </source>
</evidence>
<evidence type="ECO:0000256" key="2">
    <source>
        <dbReference type="SAM" id="MobiDB-lite"/>
    </source>
</evidence>
<evidence type="ECO:0000269" key="3">
    <source>
    </source>
</evidence>
<evidence type="ECO:0000269" key="4">
    <source>
    </source>
</evidence>
<evidence type="ECO:0000269" key="5">
    <source>
    </source>
</evidence>
<evidence type="ECO:0000269" key="6">
    <source>
    </source>
</evidence>
<evidence type="ECO:0000269" key="7">
    <source ref="7"/>
</evidence>
<evidence type="ECO:0000303" key="8">
    <source>
    </source>
</evidence>
<evidence type="ECO:0000305" key="9"/>
<evidence type="ECO:0000305" key="10">
    <source>
    </source>
</evidence>
<evidence type="ECO:0000305" key="11">
    <source>
    </source>
</evidence>
<evidence type="ECO:0000305" key="12">
    <source>
    </source>
</evidence>
<evidence type="ECO:0000312" key="13">
    <source>
        <dbReference type="PDB" id="1SR9"/>
    </source>
</evidence>
<evidence type="ECO:0000312" key="14">
    <source>
        <dbReference type="PDB" id="3FIG"/>
    </source>
</evidence>
<evidence type="ECO:0000312" key="15">
    <source>
        <dbReference type="PDB" id="3U6W"/>
    </source>
</evidence>
<evidence type="ECO:0007744" key="16">
    <source>
        <dbReference type="PDB" id="1SR9"/>
    </source>
</evidence>
<evidence type="ECO:0007744" key="17">
    <source>
        <dbReference type="PDB" id="3FIG"/>
    </source>
</evidence>
<evidence type="ECO:0007744" key="18">
    <source>
        <dbReference type="PDB" id="3HPS"/>
    </source>
</evidence>
<evidence type="ECO:0007744" key="19">
    <source>
        <dbReference type="PDB" id="3HPX"/>
    </source>
</evidence>
<evidence type="ECO:0007744" key="20">
    <source>
        <dbReference type="PDB" id="3HPZ"/>
    </source>
</evidence>
<evidence type="ECO:0007744" key="21">
    <source>
        <dbReference type="PDB" id="3HQ1"/>
    </source>
</evidence>
<evidence type="ECO:0007744" key="22">
    <source>
        <dbReference type="PDB" id="3U6W"/>
    </source>
</evidence>
<evidence type="ECO:0007829" key="23">
    <source>
        <dbReference type="PDB" id="3HPS"/>
    </source>
</evidence>
<evidence type="ECO:0007829" key="24">
    <source>
        <dbReference type="PDB" id="3HQ1"/>
    </source>
</evidence>
<sequence>MTTSESPDAYTESFGAHTIVKPAGPPRVGQPSWNPQRASSMPVNRYRPFAEEVEPIRLRNRTWPDRVIDRAPLWCAVDLRDGNQALIDPMSPARKRRMFDLLVRMGYKEIEVGFPSASQTDFDFVREIIEQGAIPDDVTIQVLTQCRPELIERTFQACSGAPRAIVHFYNSTSILQRRVVFRANRAEVQAIATDGARKCVEQAAKYPGTQWRFEYSPESYTGTELEYAKQVCDAVGEVIAPTPERPIIFNLPATVEMTTPNVYADSIEWMSRNLANRESVILSLHPHNDRGTAVAAAELGFAAGADRIEGCLFGNGERTGNVCLVTLGLNLFSRGVDPQIDFSNIDEIRRTVEYCNQLPVHERHPYGGDLVYTAFSGSHQDAINKGLDAMKLDADAADCDVDDMLWQVPYLPIDPRDVGRTYEAVIRVNSQSGKGGVAYIMKTDHGLSLPRRLQIEFSQVIQKIAEGTAGEGGEVSPKEMWDAFAEEYLAPVRPLERIRQHVDAADDDGGTTSITATVKINGVETEISGSGNGPLAAFVHALADVGFDVAVLDYYEHAMSAGDDAQAAAYVEASVTIASPAQPGEAGRHASDPVTIASPAQPGEAGRHASDPVTSKTVWGVGIAPSITTASLRAVVSAVNRAAR</sequence>
<dbReference type="EC" id="2.3.3.13" evidence="1 3"/>
<dbReference type="EMBL" id="U88526">
    <property type="protein sequence ID" value="AAB48096.1"/>
    <property type="status" value="ALT_FRAME"/>
    <property type="molecule type" value="Genomic_DNA"/>
</dbReference>
<dbReference type="EMBL" id="AL123456">
    <property type="protein sequence ID" value="CCP46536.1"/>
    <property type="molecule type" value="Genomic_DNA"/>
</dbReference>
<dbReference type="PIR" id="G70794">
    <property type="entry name" value="G70794"/>
</dbReference>
<dbReference type="RefSeq" id="NP_218227.3">
    <property type="nucleotide sequence ID" value="NC_000962.3"/>
</dbReference>
<dbReference type="RefSeq" id="WP_003902547.1">
    <property type="nucleotide sequence ID" value="NZ_NVQJ01000009.1"/>
</dbReference>
<dbReference type="PDB" id="1SR9">
    <property type="method" value="X-ray"/>
    <property type="resolution" value="2.00 A"/>
    <property type="chains" value="A/B=1-644"/>
</dbReference>
<dbReference type="PDB" id="3FIG">
    <property type="method" value="X-ray"/>
    <property type="resolution" value="2.30 A"/>
    <property type="chains" value="A/B=3-644"/>
</dbReference>
<dbReference type="PDB" id="3HPS">
    <property type="method" value="X-ray"/>
    <property type="resolution" value="1.80 A"/>
    <property type="chains" value="A/B=1-644"/>
</dbReference>
<dbReference type="PDB" id="3HPX">
    <property type="method" value="X-ray"/>
    <property type="resolution" value="2.03 A"/>
    <property type="chains" value="A/B=1-425"/>
</dbReference>
<dbReference type="PDB" id="3HPZ">
    <property type="method" value="X-ray"/>
    <property type="resolution" value="2.20 A"/>
    <property type="chains" value="A/B=1-644"/>
</dbReference>
<dbReference type="PDB" id="3HQ1">
    <property type="method" value="X-ray"/>
    <property type="resolution" value="1.70 A"/>
    <property type="chains" value="A/B=1-644"/>
</dbReference>
<dbReference type="PDB" id="3U6W">
    <property type="method" value="X-ray"/>
    <property type="resolution" value="2.21 A"/>
    <property type="chains" value="A/B=1-425"/>
</dbReference>
<dbReference type="PDBsum" id="1SR9"/>
<dbReference type="PDBsum" id="3FIG"/>
<dbReference type="PDBsum" id="3HPS"/>
<dbReference type="PDBsum" id="3HPX"/>
<dbReference type="PDBsum" id="3HPZ"/>
<dbReference type="PDBsum" id="3HQ1"/>
<dbReference type="PDBsum" id="3U6W"/>
<dbReference type="SMR" id="P9WQB3"/>
<dbReference type="FunCoup" id="P9WQB3">
    <property type="interactions" value="292"/>
</dbReference>
<dbReference type="STRING" id="83332.Rv3710"/>
<dbReference type="DrugBank" id="DB04074">
    <property type="generic name" value="alpha-Ketoisovalerate"/>
</dbReference>
<dbReference type="PaxDb" id="83332-Rv3710"/>
<dbReference type="DNASU" id="885092"/>
<dbReference type="GeneID" id="885092"/>
<dbReference type="KEGG" id="mtu:Rv3710"/>
<dbReference type="KEGG" id="mtv:RVBD_3710"/>
<dbReference type="TubercuList" id="Rv3710"/>
<dbReference type="eggNOG" id="COG0119">
    <property type="taxonomic scope" value="Bacteria"/>
</dbReference>
<dbReference type="InParanoid" id="P9WQB3"/>
<dbReference type="OrthoDB" id="9803573at2"/>
<dbReference type="BRENDA" id="2.3.3.13">
    <property type="organism ID" value="3445"/>
</dbReference>
<dbReference type="SABIO-RK" id="P9WQB3"/>
<dbReference type="UniPathway" id="UPA00048">
    <property type="reaction ID" value="UER00070"/>
</dbReference>
<dbReference type="EvolutionaryTrace" id="P9WQB3"/>
<dbReference type="Proteomes" id="UP000001584">
    <property type="component" value="Chromosome"/>
</dbReference>
<dbReference type="GO" id="GO:0005737">
    <property type="term" value="C:cytoplasm"/>
    <property type="evidence" value="ECO:0007669"/>
    <property type="project" value="UniProtKB-SubCell"/>
</dbReference>
<dbReference type="GO" id="GO:0005576">
    <property type="term" value="C:extracellular region"/>
    <property type="evidence" value="ECO:0007005"/>
    <property type="project" value="MTBBASE"/>
</dbReference>
<dbReference type="GO" id="GO:0005886">
    <property type="term" value="C:plasma membrane"/>
    <property type="evidence" value="ECO:0007005"/>
    <property type="project" value="MTBBASE"/>
</dbReference>
<dbReference type="GO" id="GO:0003852">
    <property type="term" value="F:2-isopropylmalate synthase activity"/>
    <property type="evidence" value="ECO:0000314"/>
    <property type="project" value="MTBBASE"/>
</dbReference>
<dbReference type="GO" id="GO:0003985">
    <property type="term" value="F:acetyl-CoA C-acetyltransferase activity"/>
    <property type="evidence" value="ECO:0007669"/>
    <property type="project" value="UniProtKB-UniRule"/>
</dbReference>
<dbReference type="GO" id="GO:0000287">
    <property type="term" value="F:magnesium ion binding"/>
    <property type="evidence" value="ECO:0000314"/>
    <property type="project" value="MTBBASE"/>
</dbReference>
<dbReference type="GO" id="GO:0030145">
    <property type="term" value="F:manganese ion binding"/>
    <property type="evidence" value="ECO:0000314"/>
    <property type="project" value="MTBBASE"/>
</dbReference>
<dbReference type="GO" id="GO:0030955">
    <property type="term" value="F:potassium ion binding"/>
    <property type="evidence" value="ECO:0000314"/>
    <property type="project" value="MTBBASE"/>
</dbReference>
<dbReference type="GO" id="GO:0008270">
    <property type="term" value="F:zinc ion binding"/>
    <property type="evidence" value="ECO:0000314"/>
    <property type="project" value="MTBBASE"/>
</dbReference>
<dbReference type="GO" id="GO:0009098">
    <property type="term" value="P:L-leucine biosynthetic process"/>
    <property type="evidence" value="ECO:0000314"/>
    <property type="project" value="MTBBASE"/>
</dbReference>
<dbReference type="CDD" id="cd07942">
    <property type="entry name" value="DRE_TIM_LeuA"/>
    <property type="match status" value="1"/>
</dbReference>
<dbReference type="FunFam" id="3.20.20.70:FF:000045">
    <property type="entry name" value="2-isopropylmalate synthase"/>
    <property type="match status" value="1"/>
</dbReference>
<dbReference type="Gene3D" id="3.30.160.270">
    <property type="match status" value="1"/>
</dbReference>
<dbReference type="Gene3D" id="3.20.20.70">
    <property type="entry name" value="Aldolase class I"/>
    <property type="match status" value="1"/>
</dbReference>
<dbReference type="HAMAP" id="MF_00572">
    <property type="entry name" value="LeuA_type2"/>
    <property type="match status" value="1"/>
</dbReference>
<dbReference type="InterPro" id="IPR013709">
    <property type="entry name" value="2-isopropylmalate_synth_dimer"/>
</dbReference>
<dbReference type="InterPro" id="IPR002034">
    <property type="entry name" value="AIPM/Hcit_synth_CS"/>
</dbReference>
<dbReference type="InterPro" id="IPR013785">
    <property type="entry name" value="Aldolase_TIM"/>
</dbReference>
<dbReference type="InterPro" id="IPR005668">
    <property type="entry name" value="IPM_Synthase"/>
</dbReference>
<dbReference type="InterPro" id="IPR054692">
    <property type="entry name" value="LeuA-like_post-cat"/>
</dbReference>
<dbReference type="InterPro" id="IPR036230">
    <property type="entry name" value="LeuA_allosteric_dom_sf"/>
</dbReference>
<dbReference type="InterPro" id="IPR039371">
    <property type="entry name" value="LeuA_N_DRE-TIM"/>
</dbReference>
<dbReference type="InterPro" id="IPR000891">
    <property type="entry name" value="PYR_CT"/>
</dbReference>
<dbReference type="NCBIfam" id="TIGR00970">
    <property type="entry name" value="leuA_yeast"/>
    <property type="match status" value="1"/>
</dbReference>
<dbReference type="NCBIfam" id="NF002991">
    <property type="entry name" value="PRK03739.1"/>
    <property type="match status" value="1"/>
</dbReference>
<dbReference type="PANTHER" id="PTHR46911">
    <property type="match status" value="1"/>
</dbReference>
<dbReference type="PANTHER" id="PTHR46911:SF1">
    <property type="entry name" value="2-ISOPROPYLMALATE SYNTHASE"/>
    <property type="match status" value="1"/>
</dbReference>
<dbReference type="Pfam" id="PF00682">
    <property type="entry name" value="HMGL-like"/>
    <property type="match status" value="1"/>
</dbReference>
<dbReference type="Pfam" id="PF22615">
    <property type="entry name" value="IPMS_D2"/>
    <property type="match status" value="1"/>
</dbReference>
<dbReference type="Pfam" id="PF08502">
    <property type="entry name" value="LeuA_dimer"/>
    <property type="match status" value="1"/>
</dbReference>
<dbReference type="SMART" id="SM00917">
    <property type="entry name" value="LeuA_dimer"/>
    <property type="match status" value="1"/>
</dbReference>
<dbReference type="SUPFAM" id="SSF110921">
    <property type="entry name" value="2-isopropylmalate synthase LeuA, allosteric (dimerisation) domain"/>
    <property type="match status" value="1"/>
</dbReference>
<dbReference type="SUPFAM" id="SSF51569">
    <property type="entry name" value="Aldolase"/>
    <property type="match status" value="1"/>
</dbReference>
<dbReference type="SUPFAM" id="SSF89000">
    <property type="entry name" value="post-HMGL domain-like"/>
    <property type="match status" value="1"/>
</dbReference>
<dbReference type="PROSITE" id="PS00815">
    <property type="entry name" value="AIPM_HOMOCIT_SYNTH_1"/>
    <property type="match status" value="1"/>
</dbReference>
<dbReference type="PROSITE" id="PS00816">
    <property type="entry name" value="AIPM_HOMOCIT_SYNTH_2"/>
    <property type="match status" value="1"/>
</dbReference>
<dbReference type="PROSITE" id="PS50991">
    <property type="entry name" value="PYR_CT"/>
    <property type="match status" value="1"/>
</dbReference>
<feature type="chain" id="PRO_0000140436" description="2-isopropylmalate synthase">
    <location>
        <begin position="1"/>
        <end position="644"/>
    </location>
</feature>
<feature type="domain" description="Pyruvate carboxyltransferase" evidence="1">
    <location>
        <begin position="72"/>
        <end position="346"/>
    </location>
</feature>
<feature type="repeat" description="VNTR1" evidence="3">
    <location>
        <begin position="575"/>
        <end position="593"/>
    </location>
</feature>
<feature type="repeat" description="VNTR2" evidence="3">
    <location>
        <begin position="594"/>
        <end position="612"/>
    </location>
</feature>
<feature type="region of interest" description="Disordered" evidence="2">
    <location>
        <begin position="1"/>
        <end position="40"/>
    </location>
</feature>
<feature type="region of interest" description="N-terminal domain" evidence="4">
    <location>
        <begin position="51"/>
        <end position="368"/>
    </location>
</feature>
<feature type="region of interest" description="Subdomain I" evidence="4">
    <location>
        <begin position="369"/>
        <end position="424"/>
    </location>
</feature>
<feature type="region of interest" description="Linker" evidence="4">
    <location>
        <begin position="425"/>
        <end position="433"/>
    </location>
</feature>
<feature type="region of interest" description="Required for the condensation reaction. Not required to bind substrate" evidence="6">
    <location>
        <begin position="426"/>
        <end position="644"/>
    </location>
</feature>
<feature type="region of interest" description="Subdomain II" evidence="4">
    <location>
        <begin position="434"/>
        <end position="490"/>
    </location>
</feature>
<feature type="region of interest" description="Regulatory domain" evidence="1 4">
    <location>
        <begin position="491"/>
        <end position="644"/>
    </location>
</feature>
<feature type="region of interest" description="Disordered" evidence="2">
    <location>
        <begin position="581"/>
        <end position="612"/>
    </location>
</feature>
<feature type="compositionally biased region" description="Polar residues" evidence="2">
    <location>
        <begin position="31"/>
        <end position="40"/>
    </location>
</feature>
<feature type="binding site" evidence="4 6 13 15">
    <location>
        <position position="80"/>
    </location>
    <ligand>
        <name>3-methyl-2-oxobutanoate</name>
        <dbReference type="ChEBI" id="CHEBI:11851"/>
    </ligand>
</feature>
<feature type="binding site" evidence="1 11 12 16 17 18 19 20 21 22">
    <location>
        <position position="81"/>
    </location>
    <ligand>
        <name>Mg(2+)</name>
        <dbReference type="ChEBI" id="CHEBI:18420"/>
    </ligand>
</feature>
<feature type="binding site" evidence="4 6 13 15">
    <location>
        <position position="254"/>
    </location>
    <ligand>
        <name>3-methyl-2-oxobutanoate</name>
        <dbReference type="ChEBI" id="CHEBI:11851"/>
    </ligand>
</feature>
<feature type="binding site" evidence="4 6 13 15">
    <location>
        <position position="285"/>
    </location>
    <ligand>
        <name>3-methyl-2-oxobutanoate</name>
        <dbReference type="ChEBI" id="CHEBI:11851"/>
    </ligand>
</feature>
<feature type="binding site" evidence="1 11 12 16 17 18 19 20 21 22">
    <location>
        <position position="285"/>
    </location>
    <ligand>
        <name>Mg(2+)</name>
        <dbReference type="ChEBI" id="CHEBI:18420"/>
    </ligand>
</feature>
<feature type="binding site" evidence="4 6 16 22">
    <location>
        <position position="287"/>
    </location>
    <ligand>
        <name>3-methyl-2-oxobutanoate</name>
        <dbReference type="ChEBI" id="CHEBI:11851"/>
    </ligand>
</feature>
<feature type="binding site" evidence="1 11 12 16 17 18 19 20 21 22">
    <location>
        <position position="287"/>
    </location>
    <ligand>
        <name>Mg(2+)</name>
        <dbReference type="ChEBI" id="CHEBI:18420"/>
    </ligand>
</feature>
<feature type="binding site" evidence="1 12 20 21">
    <location>
        <position position="321"/>
    </location>
    <ligand>
        <name>Mg(2+)</name>
        <dbReference type="ChEBI" id="CHEBI:18420"/>
    </ligand>
</feature>
<feature type="binding site" evidence="4 14">
    <location>
        <position position="532"/>
    </location>
    <ligand>
        <name>L-leucine</name>
        <dbReference type="ChEBI" id="CHEBI:57427"/>
    </ligand>
</feature>
<feature type="binding site" evidence="4 14">
    <location>
        <position position="536"/>
    </location>
    <ligand>
        <name>L-leucine</name>
        <dbReference type="ChEBI" id="CHEBI:57427"/>
    </ligand>
</feature>
<feature type="binding site" evidence="4 14">
    <location>
        <position position="563"/>
    </location>
    <ligand>
        <name>L-leucine</name>
        <dbReference type="ChEBI" id="CHEBI:57427"/>
    </ligand>
</feature>
<feature type="binding site" evidence="4 14">
    <location>
        <position position="565"/>
    </location>
    <ligand>
        <name>L-leucine</name>
        <dbReference type="ChEBI" id="CHEBI:57427"/>
    </ligand>
</feature>
<feature type="binding site" evidence="4 14">
    <location>
        <position position="625"/>
    </location>
    <ligand>
        <name>L-leucine</name>
        <dbReference type="ChEBI" id="CHEBI:57427"/>
    </ligand>
</feature>
<feature type="binding site" evidence="4 14">
    <location>
        <position position="627"/>
    </location>
    <ligand>
        <name>L-leucine</name>
        <dbReference type="ChEBI" id="CHEBI:57427"/>
    </ligand>
</feature>
<feature type="sequence conflict" description="In Ref. 1; AAB48096." evidence="9" ref="1">
    <original>TTASLR</original>
    <variation>NRPA</variation>
    <location>
        <begin position="628"/>
        <end position="633"/>
    </location>
</feature>
<feature type="sequence conflict" description="In Ref. 1; AAB48096." evidence="9" ref="1">
    <original>AAR</original>
    <variation>RHARTALN</variation>
    <location>
        <begin position="642"/>
        <end position="644"/>
    </location>
</feature>
<feature type="helix" evidence="24">
    <location>
        <begin position="43"/>
        <end position="45"/>
    </location>
</feature>
<feature type="helix" evidence="24">
    <location>
        <begin position="49"/>
        <end position="52"/>
    </location>
</feature>
<feature type="helix" evidence="24">
    <location>
        <begin position="63"/>
        <end position="65"/>
    </location>
</feature>
<feature type="strand" evidence="24">
    <location>
        <begin position="73"/>
        <end position="76"/>
    </location>
</feature>
<feature type="helix" evidence="24">
    <location>
        <begin position="78"/>
        <end position="82"/>
    </location>
</feature>
<feature type="helix" evidence="24">
    <location>
        <begin position="83"/>
        <end position="85"/>
    </location>
</feature>
<feature type="helix" evidence="24">
    <location>
        <begin position="92"/>
        <end position="105"/>
    </location>
</feature>
<feature type="strand" evidence="24">
    <location>
        <begin position="108"/>
        <end position="113"/>
    </location>
</feature>
<feature type="turn" evidence="24">
    <location>
        <begin position="115"/>
        <end position="117"/>
    </location>
</feature>
<feature type="helix" evidence="24">
    <location>
        <begin position="119"/>
        <end position="130"/>
    </location>
</feature>
<feature type="strand" evidence="24">
    <location>
        <begin position="139"/>
        <end position="146"/>
    </location>
</feature>
<feature type="helix" evidence="24">
    <location>
        <begin position="148"/>
        <end position="158"/>
    </location>
</feature>
<feature type="strand" evidence="24">
    <location>
        <begin position="162"/>
        <end position="171"/>
    </location>
</feature>
<feature type="helix" evidence="24">
    <location>
        <begin position="174"/>
        <end position="179"/>
    </location>
</feature>
<feature type="helix" evidence="24">
    <location>
        <begin position="185"/>
        <end position="205"/>
    </location>
</feature>
<feature type="strand" evidence="24">
    <location>
        <begin position="208"/>
        <end position="218"/>
    </location>
</feature>
<feature type="helix" evidence="24">
    <location>
        <begin position="220"/>
        <end position="222"/>
    </location>
</feature>
<feature type="helix" evidence="24">
    <location>
        <begin position="225"/>
        <end position="239"/>
    </location>
</feature>
<feature type="strand" evidence="24">
    <location>
        <begin position="243"/>
        <end position="245"/>
    </location>
</feature>
<feature type="strand" evidence="24">
    <location>
        <begin position="247"/>
        <end position="255"/>
    </location>
</feature>
<feature type="helix" evidence="24">
    <location>
        <begin position="260"/>
        <end position="273"/>
    </location>
</feature>
<feature type="strand" evidence="23">
    <location>
        <begin position="274"/>
        <end position="276"/>
    </location>
</feature>
<feature type="helix" evidence="24">
    <location>
        <begin position="277"/>
        <end position="279"/>
    </location>
</feature>
<feature type="strand" evidence="24">
    <location>
        <begin position="280"/>
        <end position="287"/>
    </location>
</feature>
<feature type="helix" evidence="24">
    <location>
        <begin position="293"/>
        <end position="302"/>
    </location>
</feature>
<feature type="strand" evidence="24">
    <location>
        <begin position="307"/>
        <end position="311"/>
    </location>
</feature>
<feature type="helix" evidence="24">
    <location>
        <begin position="312"/>
        <end position="314"/>
    </location>
</feature>
<feature type="helix" evidence="24">
    <location>
        <begin position="324"/>
        <end position="332"/>
    </location>
</feature>
<feature type="turn" evidence="24">
    <location>
        <begin position="333"/>
        <end position="335"/>
    </location>
</feature>
<feature type="helix" evidence="24">
    <location>
        <begin position="345"/>
        <end position="356"/>
    </location>
</feature>
<feature type="turn" evidence="24">
    <location>
        <begin position="365"/>
        <end position="367"/>
    </location>
</feature>
<feature type="turn" evidence="24">
    <location>
        <begin position="369"/>
        <end position="372"/>
    </location>
</feature>
<feature type="helix" evidence="24">
    <location>
        <begin position="377"/>
        <end position="396"/>
    </location>
</feature>
<feature type="helix" evidence="24">
    <location>
        <begin position="401"/>
        <end position="403"/>
    </location>
</feature>
<feature type="helix" evidence="24">
    <location>
        <begin position="415"/>
        <end position="418"/>
    </location>
</feature>
<feature type="helix" evidence="24">
    <location>
        <begin position="437"/>
        <end position="445"/>
    </location>
</feature>
<feature type="helix" evidence="24">
    <location>
        <begin position="451"/>
        <end position="463"/>
    </location>
</feature>
<feature type="helix" evidence="24">
    <location>
        <begin position="477"/>
        <end position="488"/>
    </location>
</feature>
<feature type="strand" evidence="24">
    <location>
        <begin position="493"/>
        <end position="503"/>
    </location>
</feature>
<feature type="strand" evidence="24">
    <location>
        <begin position="512"/>
        <end position="520"/>
    </location>
</feature>
<feature type="strand" evidence="24">
    <location>
        <begin position="523"/>
        <end position="533"/>
    </location>
</feature>
<feature type="helix" evidence="24">
    <location>
        <begin position="534"/>
        <end position="543"/>
    </location>
</feature>
<feature type="turn" evidence="24">
    <location>
        <begin position="544"/>
        <end position="546"/>
    </location>
</feature>
<feature type="strand" evidence="24">
    <location>
        <begin position="548"/>
        <end position="562"/>
    </location>
</feature>
<feature type="strand" evidence="24">
    <location>
        <begin position="567"/>
        <end position="576"/>
    </location>
</feature>
<feature type="strand" evidence="24">
    <location>
        <begin position="616"/>
        <end position="626"/>
    </location>
</feature>
<feature type="helix" evidence="24">
    <location>
        <begin position="627"/>
        <end position="642"/>
    </location>
</feature>
<comment type="function">
    <text evidence="1 3 5 6">Catalyzes the condensation of the acetyl group of acetyl-CoA with 3-methyl-2-oxobutanoate (alpha-ketoisovalerate) to form 3-carboxy-3-hydroxy-4-methylpentanoate (2-isopropylmalate) (PubMed:11914056, PubMed:16846242). Active on small alpha-keto acids such as 3-methyl-2-oxobutanoate, pyruvate, alpha-ketovalerate, and alpha-ketobutyrate; only uses acetyl-CoA (PubMed:16846242). Complements an E.coli deletion (PubMed:22352945).</text>
</comment>
<comment type="catalytic activity">
    <reaction evidence="1 3 5">
        <text>3-methyl-2-oxobutanoate + acetyl-CoA + H2O = (2S)-2-isopropylmalate + CoA + H(+)</text>
        <dbReference type="Rhea" id="RHEA:21524"/>
        <dbReference type="ChEBI" id="CHEBI:1178"/>
        <dbReference type="ChEBI" id="CHEBI:11851"/>
        <dbReference type="ChEBI" id="CHEBI:15377"/>
        <dbReference type="ChEBI" id="CHEBI:15378"/>
        <dbReference type="ChEBI" id="CHEBI:57287"/>
        <dbReference type="ChEBI" id="CHEBI:57288"/>
        <dbReference type="EC" id="2.3.3.13"/>
    </reaction>
</comment>
<comment type="cofactor">
    <cofactor evidence="1 5">
        <name>Mg(2+)</name>
        <dbReference type="ChEBI" id="CHEBI:18420"/>
    </cofactor>
    <text evidence="3 4 5 6 7">In the different crystal structures Zn(2+), Ni(2+) and Mn(2+) have been detected (PubMed:15159544, PubMed:22352945, Ref.7). The divalent cation used in Chanchaem is not stated (PubMed:11914056). Mg(2+) was used in de Carvalho (PubMed:16846242). A fourth metal ligand is only seen in the truncated enzyme in the absence of substrate (PubMed:22352945).</text>
</comment>
<comment type="biophysicochemical properties">
    <kinetics>
        <KM evidence="3">24.6 uM for 3-methyl-2-oxobutanoate</KM>
        <KM evidence="3">243.5 uM for acetyl-CoA</KM>
        <KM evidence="5">12 uM for 3-methyl-2-oxobutanoate</KM>
        <KM evidence="5">410 uM for alpha-ketovalerate</KM>
        <KM evidence="5">860 uM for alpha-ketobutyrate</KM>
        <KM evidence="5">9500 uM for pyruvate</KM>
        <KM evidence="5">136 uM for acetyl-CoA</KM>
        <Vmax evidence="3">0.8 umol/min/mg enzyme for 3-methyl-2-oxobutanoate</Vmax>
        <Vmax evidence="3">207.0 umol/min/mg enzyme for acetyl-CoA</Vmax>
        <text evidence="5">kcat is 3.5 sec(-1) for 3-methyl-2-oxobutanoate and 2.1 for acetyl-CoA.</text>
    </kinetics>
    <phDependence>
        <text evidence="3">Optimum pH is 8.5.</text>
    </phDependence>
</comment>
<comment type="pathway">
    <text evidence="1 10">Amino-acid biosynthesis; L-leucine biosynthesis; L-leucine from 3-methyl-2-oxobutanoate: step 1/4.</text>
</comment>
<comment type="subunit">
    <text evidence="1 3 4 5 6">Homodimer (PubMed:11914056, PubMed:15159544, PubMed:16846242). Remains a homodimer in the presence of L-leucine (PubMed:15159544, PubMed:16846242, PubMed:22352945).</text>
</comment>
<comment type="subcellular location">
    <subcellularLocation>
        <location evidence="1">Cytoplasm</location>
    </subcellularLocation>
</comment>
<comment type="domain">
    <text evidence="4 6">Has two major domains which are separated by two small subdomains, that are themselves joined by a flexible hinge. The N-terminal catalytic domain forms an (alpha/beta)8 TIM barrel and binds substrate (3-methyl-2-oxobutanoate) and Zn(2+). Subdomains I and II (separated by a flexible linker) make a three-helix bundle that packs against the C-terminal domain. The C-terminal regulatory domain includes two variable number tandem repeats (VNTR) in this strain. The regulatory domain binds L-Leu (the pathway end product) in the dimer interface. The individual domains of the monomers swap between monomers (PubMed:15159544). The C-terminus (residues 426-644) is required for condensation of the 2 substrates (PubMed:22352945).</text>
</comment>
<comment type="miscellaneous">
    <text evidence="3">In Mycobacteria this gene has a variable number tandem repeat (VNTR); in H37Rv there are 2 repeats, other strains can have up to 6 repeats.</text>
</comment>
<comment type="miscellaneous">
    <text>Was identified as a high-confidence drug target.</text>
</comment>
<comment type="similarity">
    <text evidence="1">Belongs to the alpha-IPM synthase/homocitrate synthase family. LeuA type 2 subfamily.</text>
</comment>
<comment type="sequence caution" evidence="9">
    <conflict type="frameshift">
        <sequence resource="EMBL-CDS" id="AAB48096"/>
    </conflict>
</comment>
<organism>
    <name type="scientific">Mycobacterium tuberculosis (strain ATCC 25618 / H37Rv)</name>
    <dbReference type="NCBI Taxonomy" id="83332"/>
    <lineage>
        <taxon>Bacteria</taxon>
        <taxon>Bacillati</taxon>
        <taxon>Actinomycetota</taxon>
        <taxon>Actinomycetes</taxon>
        <taxon>Mycobacteriales</taxon>
        <taxon>Mycobacteriaceae</taxon>
        <taxon>Mycobacterium</taxon>
        <taxon>Mycobacterium tuberculosis complex</taxon>
    </lineage>
</organism>
<proteinExistence type="evidence at protein level"/>
<name>LEU1_MYCTU</name>
<keyword id="KW-0002">3D-structure</keyword>
<keyword id="KW-0028">Amino-acid biosynthesis</keyword>
<keyword id="KW-0100">Branched-chain amino acid biosynthesis</keyword>
<keyword id="KW-0963">Cytoplasm</keyword>
<keyword id="KW-0432">Leucine biosynthesis</keyword>
<keyword id="KW-0460">Magnesium</keyword>
<keyword id="KW-0479">Metal-binding</keyword>
<keyword id="KW-1185">Reference proteome</keyword>
<keyword id="KW-0677">Repeat</keyword>
<keyword id="KW-0808">Transferase</keyword>
<accession>P9WQB3</accession>
<accession>L0TGA3</accession>
<accession>O69677</accession>
<accession>P96420</accession>
<protein>
    <recommendedName>
        <fullName evidence="1">2-isopropylmalate synthase</fullName>
        <ecNumber evidence="1 3">2.3.3.13</ecNumber>
    </recommendedName>
    <alternativeName>
        <fullName evidence="1">Alpha-IPM synthase</fullName>
    </alternativeName>
    <alternativeName>
        <fullName evidence="1 8">Alpha-isopropylmalate synthase</fullName>
    </alternativeName>
</protein>
<gene>
    <name evidence="1 8" type="primary">leuA</name>
    <name type="ordered locus">Rv3710</name>
    <name type="ORF">MTV025.058</name>
</gene>